<protein>
    <recommendedName>
        <fullName evidence="1">Large ribosomal subunit protein uL22</fullName>
    </recommendedName>
    <alternativeName>
        <fullName evidence="2">50S ribosomal protein L22</fullName>
    </alternativeName>
</protein>
<sequence>MAKAILKFIRVSPIKARLIAREVQGMNAEYAIASLQFTPNKAAGIISKVIASAVANAGLDPVDAVITSARVDKGPVLKRFTPRARGSASPKHKPTAHIMIEVAAATKGDK</sequence>
<reference key="1">
    <citation type="journal article" date="2007" name="PLoS ONE">
        <title>The complete genome sequence and analysis of the Epsilonproteobacterium Arcobacter butzleri.</title>
        <authorList>
            <person name="Miller W.G."/>
            <person name="Parker C.T."/>
            <person name="Rubenfield M."/>
            <person name="Mendz G.L."/>
            <person name="Woesten M.M.S.M."/>
            <person name="Ussery D.W."/>
            <person name="Stolz J.F."/>
            <person name="Binnewies T.T."/>
            <person name="Hallin P.F."/>
            <person name="Wang G."/>
            <person name="Malek J.A."/>
            <person name="Rogosin A."/>
            <person name="Stanker L.H."/>
            <person name="Mandrell R.E."/>
        </authorList>
    </citation>
    <scope>NUCLEOTIDE SEQUENCE [LARGE SCALE GENOMIC DNA]</scope>
    <source>
        <strain>RM4018</strain>
    </source>
</reference>
<gene>
    <name evidence="1" type="primary">rplV</name>
    <name type="ordered locus">Abu_0757</name>
</gene>
<accession>A8ESU8</accession>
<comment type="function">
    <text evidence="1">This protein binds specifically to 23S rRNA; its binding is stimulated by other ribosomal proteins, e.g. L4, L17, and L20. It is important during the early stages of 50S assembly. It makes multiple contacts with different domains of the 23S rRNA in the assembled 50S subunit and ribosome (By similarity).</text>
</comment>
<comment type="function">
    <text evidence="1">The globular domain of the protein is located near the polypeptide exit tunnel on the outside of the subunit, while an extended beta-hairpin is found that lines the wall of the exit tunnel in the center of the 70S ribosome.</text>
</comment>
<comment type="subunit">
    <text evidence="1">Part of the 50S ribosomal subunit.</text>
</comment>
<comment type="similarity">
    <text evidence="1">Belongs to the universal ribosomal protein uL22 family.</text>
</comment>
<keyword id="KW-1185">Reference proteome</keyword>
<keyword id="KW-0687">Ribonucleoprotein</keyword>
<keyword id="KW-0689">Ribosomal protein</keyword>
<keyword id="KW-0694">RNA-binding</keyword>
<keyword id="KW-0699">rRNA-binding</keyword>
<feature type="chain" id="PRO_1000067604" description="Large ribosomal subunit protein uL22">
    <location>
        <begin position="1"/>
        <end position="110"/>
    </location>
</feature>
<evidence type="ECO:0000255" key="1">
    <source>
        <dbReference type="HAMAP-Rule" id="MF_01331"/>
    </source>
</evidence>
<evidence type="ECO:0000305" key="2"/>
<proteinExistence type="inferred from homology"/>
<dbReference type="EMBL" id="CP000361">
    <property type="protein sequence ID" value="ABV67022.1"/>
    <property type="molecule type" value="Genomic_DNA"/>
</dbReference>
<dbReference type="RefSeq" id="WP_004510825.1">
    <property type="nucleotide sequence ID" value="NC_009850.1"/>
</dbReference>
<dbReference type="SMR" id="A8ESU8"/>
<dbReference type="STRING" id="367737.Abu_0757"/>
<dbReference type="GeneID" id="24303673"/>
<dbReference type="KEGG" id="abu:Abu_0757"/>
<dbReference type="eggNOG" id="COG0091">
    <property type="taxonomic scope" value="Bacteria"/>
</dbReference>
<dbReference type="HOGENOM" id="CLU_083987_3_3_7"/>
<dbReference type="Proteomes" id="UP000001136">
    <property type="component" value="Chromosome"/>
</dbReference>
<dbReference type="GO" id="GO:0022625">
    <property type="term" value="C:cytosolic large ribosomal subunit"/>
    <property type="evidence" value="ECO:0007669"/>
    <property type="project" value="TreeGrafter"/>
</dbReference>
<dbReference type="GO" id="GO:0019843">
    <property type="term" value="F:rRNA binding"/>
    <property type="evidence" value="ECO:0007669"/>
    <property type="project" value="UniProtKB-UniRule"/>
</dbReference>
<dbReference type="GO" id="GO:0003735">
    <property type="term" value="F:structural constituent of ribosome"/>
    <property type="evidence" value="ECO:0007669"/>
    <property type="project" value="InterPro"/>
</dbReference>
<dbReference type="GO" id="GO:0006412">
    <property type="term" value="P:translation"/>
    <property type="evidence" value="ECO:0007669"/>
    <property type="project" value="UniProtKB-UniRule"/>
</dbReference>
<dbReference type="Gene3D" id="3.90.470.10">
    <property type="entry name" value="Ribosomal protein L22/L17"/>
    <property type="match status" value="1"/>
</dbReference>
<dbReference type="HAMAP" id="MF_01331_B">
    <property type="entry name" value="Ribosomal_uL22_B"/>
    <property type="match status" value="1"/>
</dbReference>
<dbReference type="InterPro" id="IPR001063">
    <property type="entry name" value="Ribosomal_uL22"/>
</dbReference>
<dbReference type="InterPro" id="IPR005727">
    <property type="entry name" value="Ribosomal_uL22_bac/chlpt-type"/>
</dbReference>
<dbReference type="InterPro" id="IPR047867">
    <property type="entry name" value="Ribosomal_uL22_bac/org-type"/>
</dbReference>
<dbReference type="InterPro" id="IPR018260">
    <property type="entry name" value="Ribosomal_uL22_CS"/>
</dbReference>
<dbReference type="InterPro" id="IPR036394">
    <property type="entry name" value="Ribosomal_uL22_sf"/>
</dbReference>
<dbReference type="NCBIfam" id="TIGR01044">
    <property type="entry name" value="rplV_bact"/>
    <property type="match status" value="1"/>
</dbReference>
<dbReference type="PANTHER" id="PTHR13501">
    <property type="entry name" value="CHLOROPLAST 50S RIBOSOMAL PROTEIN L22-RELATED"/>
    <property type="match status" value="1"/>
</dbReference>
<dbReference type="PANTHER" id="PTHR13501:SF8">
    <property type="entry name" value="LARGE RIBOSOMAL SUBUNIT PROTEIN UL22M"/>
    <property type="match status" value="1"/>
</dbReference>
<dbReference type="Pfam" id="PF00237">
    <property type="entry name" value="Ribosomal_L22"/>
    <property type="match status" value="1"/>
</dbReference>
<dbReference type="SUPFAM" id="SSF54843">
    <property type="entry name" value="Ribosomal protein L22"/>
    <property type="match status" value="1"/>
</dbReference>
<dbReference type="PROSITE" id="PS00464">
    <property type="entry name" value="RIBOSOMAL_L22"/>
    <property type="match status" value="1"/>
</dbReference>
<name>RL22_ALIB4</name>
<organism>
    <name type="scientific">Aliarcobacter butzleri (strain RM4018)</name>
    <name type="common">Arcobacter butzleri</name>
    <dbReference type="NCBI Taxonomy" id="367737"/>
    <lineage>
        <taxon>Bacteria</taxon>
        <taxon>Pseudomonadati</taxon>
        <taxon>Campylobacterota</taxon>
        <taxon>Epsilonproteobacteria</taxon>
        <taxon>Campylobacterales</taxon>
        <taxon>Arcobacteraceae</taxon>
        <taxon>Aliarcobacter</taxon>
    </lineage>
</organism>